<gene>
    <name evidence="1" type="primary">lepA</name>
    <name type="ordered locus">Meso_4075</name>
</gene>
<reference key="1">
    <citation type="submission" date="2006-06" db="EMBL/GenBank/DDBJ databases">
        <title>Complete sequence of chromosome of Mesorhizobium sp. BNC1.</title>
        <authorList>
            <consortium name="US DOE Joint Genome Institute"/>
            <person name="Copeland A."/>
            <person name="Lucas S."/>
            <person name="Lapidus A."/>
            <person name="Barry K."/>
            <person name="Detter J.C."/>
            <person name="Glavina del Rio T."/>
            <person name="Hammon N."/>
            <person name="Israni S."/>
            <person name="Dalin E."/>
            <person name="Tice H."/>
            <person name="Pitluck S."/>
            <person name="Chertkov O."/>
            <person name="Brettin T."/>
            <person name="Bruce D."/>
            <person name="Han C."/>
            <person name="Tapia R."/>
            <person name="Gilna P."/>
            <person name="Schmutz J."/>
            <person name="Larimer F."/>
            <person name="Land M."/>
            <person name="Hauser L."/>
            <person name="Kyrpides N."/>
            <person name="Mikhailova N."/>
            <person name="Richardson P."/>
        </authorList>
    </citation>
    <scope>NUCLEOTIDE SEQUENCE [LARGE SCALE GENOMIC DNA]</scope>
    <source>
        <strain>BNC1</strain>
    </source>
</reference>
<organism>
    <name type="scientific">Chelativorans sp. (strain BNC1)</name>
    <dbReference type="NCBI Taxonomy" id="266779"/>
    <lineage>
        <taxon>Bacteria</taxon>
        <taxon>Pseudomonadati</taxon>
        <taxon>Pseudomonadota</taxon>
        <taxon>Alphaproteobacteria</taxon>
        <taxon>Hyphomicrobiales</taxon>
        <taxon>Phyllobacteriaceae</taxon>
        <taxon>Chelativorans</taxon>
    </lineage>
</organism>
<dbReference type="EC" id="3.6.5.n1" evidence="1"/>
<dbReference type="EMBL" id="CP000390">
    <property type="protein sequence ID" value="ABG65442.1"/>
    <property type="molecule type" value="Genomic_DNA"/>
</dbReference>
<dbReference type="SMR" id="Q11AY3"/>
<dbReference type="STRING" id="266779.Meso_4075"/>
<dbReference type="KEGG" id="mes:Meso_4075"/>
<dbReference type="eggNOG" id="COG0481">
    <property type="taxonomic scope" value="Bacteria"/>
</dbReference>
<dbReference type="HOGENOM" id="CLU_009995_3_3_5"/>
<dbReference type="GO" id="GO:0005886">
    <property type="term" value="C:plasma membrane"/>
    <property type="evidence" value="ECO:0007669"/>
    <property type="project" value="UniProtKB-SubCell"/>
</dbReference>
<dbReference type="GO" id="GO:0005525">
    <property type="term" value="F:GTP binding"/>
    <property type="evidence" value="ECO:0007669"/>
    <property type="project" value="UniProtKB-UniRule"/>
</dbReference>
<dbReference type="GO" id="GO:0003924">
    <property type="term" value="F:GTPase activity"/>
    <property type="evidence" value="ECO:0007669"/>
    <property type="project" value="UniProtKB-UniRule"/>
</dbReference>
<dbReference type="GO" id="GO:0097216">
    <property type="term" value="F:guanosine tetraphosphate binding"/>
    <property type="evidence" value="ECO:0007669"/>
    <property type="project" value="UniProtKB-ARBA"/>
</dbReference>
<dbReference type="GO" id="GO:0043022">
    <property type="term" value="F:ribosome binding"/>
    <property type="evidence" value="ECO:0007669"/>
    <property type="project" value="UniProtKB-UniRule"/>
</dbReference>
<dbReference type="GO" id="GO:0003746">
    <property type="term" value="F:translation elongation factor activity"/>
    <property type="evidence" value="ECO:0007669"/>
    <property type="project" value="UniProtKB-UniRule"/>
</dbReference>
<dbReference type="GO" id="GO:0045727">
    <property type="term" value="P:positive regulation of translation"/>
    <property type="evidence" value="ECO:0007669"/>
    <property type="project" value="UniProtKB-UniRule"/>
</dbReference>
<dbReference type="CDD" id="cd03699">
    <property type="entry name" value="EF4_II"/>
    <property type="match status" value="1"/>
</dbReference>
<dbReference type="CDD" id="cd16260">
    <property type="entry name" value="EF4_III"/>
    <property type="match status" value="1"/>
</dbReference>
<dbReference type="CDD" id="cd01890">
    <property type="entry name" value="LepA"/>
    <property type="match status" value="1"/>
</dbReference>
<dbReference type="CDD" id="cd03709">
    <property type="entry name" value="lepA_C"/>
    <property type="match status" value="1"/>
</dbReference>
<dbReference type="FunFam" id="3.40.50.300:FF:000078">
    <property type="entry name" value="Elongation factor 4"/>
    <property type="match status" value="1"/>
</dbReference>
<dbReference type="FunFam" id="2.40.30.10:FF:000015">
    <property type="entry name" value="Translation factor GUF1, mitochondrial"/>
    <property type="match status" value="1"/>
</dbReference>
<dbReference type="FunFam" id="3.30.70.240:FF:000007">
    <property type="entry name" value="Translation factor GUF1, mitochondrial"/>
    <property type="match status" value="1"/>
</dbReference>
<dbReference type="FunFam" id="3.30.70.2570:FF:000001">
    <property type="entry name" value="Translation factor GUF1, mitochondrial"/>
    <property type="match status" value="1"/>
</dbReference>
<dbReference type="FunFam" id="3.30.70.870:FF:000004">
    <property type="entry name" value="Translation factor GUF1, mitochondrial"/>
    <property type="match status" value="1"/>
</dbReference>
<dbReference type="Gene3D" id="3.30.70.240">
    <property type="match status" value="1"/>
</dbReference>
<dbReference type="Gene3D" id="3.30.70.2570">
    <property type="entry name" value="Elongation factor 4, C-terminal domain"/>
    <property type="match status" value="1"/>
</dbReference>
<dbReference type="Gene3D" id="3.30.70.870">
    <property type="entry name" value="Elongation Factor G (Translational Gtpase), domain 3"/>
    <property type="match status" value="1"/>
</dbReference>
<dbReference type="Gene3D" id="3.40.50.300">
    <property type="entry name" value="P-loop containing nucleotide triphosphate hydrolases"/>
    <property type="match status" value="1"/>
</dbReference>
<dbReference type="Gene3D" id="2.40.30.10">
    <property type="entry name" value="Translation factors"/>
    <property type="match status" value="1"/>
</dbReference>
<dbReference type="HAMAP" id="MF_00071">
    <property type="entry name" value="LepA"/>
    <property type="match status" value="1"/>
</dbReference>
<dbReference type="InterPro" id="IPR006297">
    <property type="entry name" value="EF-4"/>
</dbReference>
<dbReference type="InterPro" id="IPR035647">
    <property type="entry name" value="EFG_III/V"/>
</dbReference>
<dbReference type="InterPro" id="IPR000640">
    <property type="entry name" value="EFG_V-like"/>
</dbReference>
<dbReference type="InterPro" id="IPR004161">
    <property type="entry name" value="EFTu-like_2"/>
</dbReference>
<dbReference type="InterPro" id="IPR031157">
    <property type="entry name" value="G_TR_CS"/>
</dbReference>
<dbReference type="InterPro" id="IPR038363">
    <property type="entry name" value="LepA_C_sf"/>
</dbReference>
<dbReference type="InterPro" id="IPR013842">
    <property type="entry name" value="LepA_CTD"/>
</dbReference>
<dbReference type="InterPro" id="IPR035654">
    <property type="entry name" value="LepA_IV"/>
</dbReference>
<dbReference type="InterPro" id="IPR027417">
    <property type="entry name" value="P-loop_NTPase"/>
</dbReference>
<dbReference type="InterPro" id="IPR005225">
    <property type="entry name" value="Small_GTP-bd"/>
</dbReference>
<dbReference type="InterPro" id="IPR000795">
    <property type="entry name" value="T_Tr_GTP-bd_dom"/>
</dbReference>
<dbReference type="NCBIfam" id="TIGR01393">
    <property type="entry name" value="lepA"/>
    <property type="match status" value="1"/>
</dbReference>
<dbReference type="NCBIfam" id="TIGR00231">
    <property type="entry name" value="small_GTP"/>
    <property type="match status" value="1"/>
</dbReference>
<dbReference type="PANTHER" id="PTHR43512:SF4">
    <property type="entry name" value="TRANSLATION FACTOR GUF1 HOMOLOG, CHLOROPLASTIC"/>
    <property type="match status" value="1"/>
</dbReference>
<dbReference type="PANTHER" id="PTHR43512">
    <property type="entry name" value="TRANSLATION FACTOR GUF1-RELATED"/>
    <property type="match status" value="1"/>
</dbReference>
<dbReference type="Pfam" id="PF00679">
    <property type="entry name" value="EFG_C"/>
    <property type="match status" value="1"/>
</dbReference>
<dbReference type="Pfam" id="PF00009">
    <property type="entry name" value="GTP_EFTU"/>
    <property type="match status" value="1"/>
</dbReference>
<dbReference type="Pfam" id="PF03144">
    <property type="entry name" value="GTP_EFTU_D2"/>
    <property type="match status" value="1"/>
</dbReference>
<dbReference type="Pfam" id="PF06421">
    <property type="entry name" value="LepA_C"/>
    <property type="match status" value="1"/>
</dbReference>
<dbReference type="PRINTS" id="PR00315">
    <property type="entry name" value="ELONGATNFCT"/>
</dbReference>
<dbReference type="SUPFAM" id="SSF54980">
    <property type="entry name" value="EF-G C-terminal domain-like"/>
    <property type="match status" value="2"/>
</dbReference>
<dbReference type="SUPFAM" id="SSF52540">
    <property type="entry name" value="P-loop containing nucleoside triphosphate hydrolases"/>
    <property type="match status" value="1"/>
</dbReference>
<dbReference type="PROSITE" id="PS00301">
    <property type="entry name" value="G_TR_1"/>
    <property type="match status" value="1"/>
</dbReference>
<dbReference type="PROSITE" id="PS51722">
    <property type="entry name" value="G_TR_2"/>
    <property type="match status" value="1"/>
</dbReference>
<protein>
    <recommendedName>
        <fullName evidence="1">Elongation factor 4</fullName>
        <shortName evidence="1">EF-4</shortName>
        <ecNumber evidence="1">3.6.5.n1</ecNumber>
    </recommendedName>
    <alternativeName>
        <fullName evidence="1">Ribosomal back-translocase LepA</fullName>
    </alternativeName>
</protein>
<sequence length="605" mass="66972">MPRMTNTPIKNIRNFAIVAHIDHGKSTLADRLIQMTGSLEEREMKEQVLDSMDIERERGITIKANTVRLEYDARDGEHYVLNLIDTPGHVDFAYEVSRSLAACESSLLVVDASQGVEAQTLANVYQAIDNNHEIVPVLNKVDLPAAEPERVKAQIEDVIGLDASDAIPISAKTGVGVDEVLEAIVMRLPPPHEGDASAPLKALLVDSWYDAYLGVIVLVRIIDGVLKKGQTVRMMGTGARYPVDRVGVMTPKMVMVESLGPGEIGFITASIKEVADTRVGDTITEDKRATAAALPGFKPAQPVVFCGLFPVDAADFEDLRAAVGKLRLNDASFSYEMETSAALGFGFRCGFLGLLHLEIIQERLTREFDLDLIATAPSVVYRMNLTDGKTVELHNPADMPDPVKIAEIEEPWIRATILTPDEHLGGILKLCQDRRGVQADLSYAGSRAMLVYDLPLNEVVFDFYDRLKSISRGYASFDYHLTDYREGDLVKMSILVNDEPVDALSMLVHRSQAERRGRAMCEKLKELIPQHMFKIPIQAAIGGRIIARETISALRKDVTAKCYGGDVTRKRKLLEKQKEGKKKMRQFGKVEIPQEAFIQALKMGD</sequence>
<comment type="function">
    <text evidence="1">Required for accurate and efficient protein synthesis under certain stress conditions. May act as a fidelity factor of the translation reaction, by catalyzing a one-codon backward translocation of tRNAs on improperly translocated ribosomes. Back-translocation proceeds from a post-translocation (POST) complex to a pre-translocation (PRE) complex, thus giving elongation factor G a second chance to translocate the tRNAs correctly. Binds to ribosomes in a GTP-dependent manner.</text>
</comment>
<comment type="catalytic activity">
    <reaction evidence="1">
        <text>GTP + H2O = GDP + phosphate + H(+)</text>
        <dbReference type="Rhea" id="RHEA:19669"/>
        <dbReference type="ChEBI" id="CHEBI:15377"/>
        <dbReference type="ChEBI" id="CHEBI:15378"/>
        <dbReference type="ChEBI" id="CHEBI:37565"/>
        <dbReference type="ChEBI" id="CHEBI:43474"/>
        <dbReference type="ChEBI" id="CHEBI:58189"/>
        <dbReference type="EC" id="3.6.5.n1"/>
    </reaction>
</comment>
<comment type="subcellular location">
    <subcellularLocation>
        <location evidence="1">Cell inner membrane</location>
        <topology evidence="1">Peripheral membrane protein</topology>
        <orientation evidence="1">Cytoplasmic side</orientation>
    </subcellularLocation>
</comment>
<comment type="similarity">
    <text evidence="1">Belongs to the TRAFAC class translation factor GTPase superfamily. Classic translation factor GTPase family. LepA subfamily.</text>
</comment>
<name>LEPA_CHESB</name>
<accession>Q11AY3</accession>
<proteinExistence type="inferred from homology"/>
<feature type="chain" id="PRO_0000265673" description="Elongation factor 4">
    <location>
        <begin position="1"/>
        <end position="605"/>
    </location>
</feature>
<feature type="domain" description="tr-type G">
    <location>
        <begin position="10"/>
        <end position="192"/>
    </location>
</feature>
<feature type="binding site" evidence="1">
    <location>
        <begin position="22"/>
        <end position="27"/>
    </location>
    <ligand>
        <name>GTP</name>
        <dbReference type="ChEBI" id="CHEBI:37565"/>
    </ligand>
</feature>
<feature type="binding site" evidence="1">
    <location>
        <begin position="139"/>
        <end position="142"/>
    </location>
    <ligand>
        <name>GTP</name>
        <dbReference type="ChEBI" id="CHEBI:37565"/>
    </ligand>
</feature>
<evidence type="ECO:0000255" key="1">
    <source>
        <dbReference type="HAMAP-Rule" id="MF_00071"/>
    </source>
</evidence>
<keyword id="KW-0997">Cell inner membrane</keyword>
<keyword id="KW-1003">Cell membrane</keyword>
<keyword id="KW-0342">GTP-binding</keyword>
<keyword id="KW-0378">Hydrolase</keyword>
<keyword id="KW-0472">Membrane</keyword>
<keyword id="KW-0547">Nucleotide-binding</keyword>
<keyword id="KW-0648">Protein biosynthesis</keyword>